<name>LST4_CANGA</name>
<accession>Q6FJ91</accession>
<comment type="function">
    <text evidence="1">Involved in extracellular amino acid uptake. Required for the protein trafficking from the Golgi to the plasma membrane (By similarity).</text>
</comment>
<comment type="similarity">
    <text evidence="4">Belongs to the LST4 family.</text>
</comment>
<evidence type="ECO:0000250" key="1"/>
<evidence type="ECO:0000255" key="2">
    <source>
        <dbReference type="PROSITE-ProRule" id="PRU01180"/>
    </source>
</evidence>
<evidence type="ECO:0000256" key="3">
    <source>
        <dbReference type="SAM" id="MobiDB-lite"/>
    </source>
</evidence>
<evidence type="ECO:0000305" key="4"/>
<reference key="1">
    <citation type="journal article" date="2004" name="Nature">
        <title>Genome evolution in yeasts.</title>
        <authorList>
            <person name="Dujon B."/>
            <person name="Sherman D."/>
            <person name="Fischer G."/>
            <person name="Durrens P."/>
            <person name="Casaregola S."/>
            <person name="Lafontaine I."/>
            <person name="de Montigny J."/>
            <person name="Marck C."/>
            <person name="Neuveglise C."/>
            <person name="Talla E."/>
            <person name="Goffard N."/>
            <person name="Frangeul L."/>
            <person name="Aigle M."/>
            <person name="Anthouard V."/>
            <person name="Babour A."/>
            <person name="Barbe V."/>
            <person name="Barnay S."/>
            <person name="Blanchin S."/>
            <person name="Beckerich J.-M."/>
            <person name="Beyne E."/>
            <person name="Bleykasten C."/>
            <person name="Boisrame A."/>
            <person name="Boyer J."/>
            <person name="Cattolico L."/>
            <person name="Confanioleri F."/>
            <person name="de Daruvar A."/>
            <person name="Despons L."/>
            <person name="Fabre E."/>
            <person name="Fairhead C."/>
            <person name="Ferry-Dumazet H."/>
            <person name="Groppi A."/>
            <person name="Hantraye F."/>
            <person name="Hennequin C."/>
            <person name="Jauniaux N."/>
            <person name="Joyet P."/>
            <person name="Kachouri R."/>
            <person name="Kerrest A."/>
            <person name="Koszul R."/>
            <person name="Lemaire M."/>
            <person name="Lesur I."/>
            <person name="Ma L."/>
            <person name="Muller H."/>
            <person name="Nicaud J.-M."/>
            <person name="Nikolski M."/>
            <person name="Oztas S."/>
            <person name="Ozier-Kalogeropoulos O."/>
            <person name="Pellenz S."/>
            <person name="Potier S."/>
            <person name="Richard G.-F."/>
            <person name="Straub M.-L."/>
            <person name="Suleau A."/>
            <person name="Swennen D."/>
            <person name="Tekaia F."/>
            <person name="Wesolowski-Louvel M."/>
            <person name="Westhof E."/>
            <person name="Wirth B."/>
            <person name="Zeniou-Meyer M."/>
            <person name="Zivanovic Y."/>
            <person name="Bolotin-Fukuhara M."/>
            <person name="Thierry A."/>
            <person name="Bouchier C."/>
            <person name="Caudron B."/>
            <person name="Scarpelli C."/>
            <person name="Gaillardin C."/>
            <person name="Weissenbach J."/>
            <person name="Wincker P."/>
            <person name="Souciet J.-L."/>
        </authorList>
    </citation>
    <scope>NUCLEOTIDE SEQUENCE [LARGE SCALE GENOMIC DNA]</scope>
    <source>
        <strain>ATCC 2001 / BCRC 20586 / JCM 3761 / NBRC 0622 / NRRL Y-65 / CBS 138</strain>
    </source>
</reference>
<dbReference type="EMBL" id="CR380959">
    <property type="protein sequence ID" value="CAG62679.1"/>
    <property type="molecule type" value="Genomic_DNA"/>
</dbReference>
<dbReference type="RefSeq" id="XP_449703.1">
    <property type="nucleotide sequence ID" value="XM_449703.1"/>
</dbReference>
<dbReference type="SMR" id="Q6FJ91"/>
<dbReference type="FunCoup" id="Q6FJ91">
    <property type="interactions" value="60"/>
</dbReference>
<dbReference type="STRING" id="284593.Q6FJ91"/>
<dbReference type="EnsemblFungi" id="CAGL0M08228g-T">
    <property type="protein sequence ID" value="CAGL0M08228g-T-p1"/>
    <property type="gene ID" value="CAGL0M08228g"/>
</dbReference>
<dbReference type="KEGG" id="cgr:2891262"/>
<dbReference type="CGD" id="CAL0137017">
    <property type="gene designation" value="CAGL0M08228g"/>
</dbReference>
<dbReference type="VEuPathDB" id="FungiDB:CAGL0M08228g"/>
<dbReference type="eggNOG" id="ENOG502QPJF">
    <property type="taxonomic scope" value="Eukaryota"/>
</dbReference>
<dbReference type="HOGENOM" id="CLU_010482_0_0_1"/>
<dbReference type="InParanoid" id="Q6FJ91"/>
<dbReference type="OMA" id="SEYDEYP"/>
<dbReference type="Proteomes" id="UP000002428">
    <property type="component" value="Chromosome M"/>
</dbReference>
<dbReference type="GO" id="GO:1990877">
    <property type="term" value="C:FNIP-folliculin RagC/D GAP"/>
    <property type="evidence" value="ECO:0007669"/>
    <property type="project" value="EnsemblFungi"/>
</dbReference>
<dbReference type="GO" id="GO:0005774">
    <property type="term" value="C:vacuolar membrane"/>
    <property type="evidence" value="ECO:0007669"/>
    <property type="project" value="EnsemblFungi"/>
</dbReference>
<dbReference type="GO" id="GO:0005096">
    <property type="term" value="F:GTPase activator activity"/>
    <property type="evidence" value="ECO:0007669"/>
    <property type="project" value="EnsemblFungi"/>
</dbReference>
<dbReference type="GO" id="GO:0006865">
    <property type="term" value="P:amino acid transport"/>
    <property type="evidence" value="ECO:0007669"/>
    <property type="project" value="UniProtKB-KW"/>
</dbReference>
<dbReference type="GO" id="GO:0071230">
    <property type="term" value="P:cellular response to amino acid stimulus"/>
    <property type="evidence" value="ECO:0007669"/>
    <property type="project" value="EnsemblFungi"/>
</dbReference>
<dbReference type="GO" id="GO:1904263">
    <property type="term" value="P:positive regulation of TORC1 signaling"/>
    <property type="evidence" value="ECO:0007669"/>
    <property type="project" value="EnsemblFungi"/>
</dbReference>
<dbReference type="GO" id="GO:0015031">
    <property type="term" value="P:protein transport"/>
    <property type="evidence" value="ECO:0007669"/>
    <property type="project" value="UniProtKB-KW"/>
</dbReference>
<dbReference type="InterPro" id="IPR037545">
    <property type="entry name" value="DENN_FNIP1/2"/>
</dbReference>
<dbReference type="InterPro" id="IPR041153">
    <property type="entry name" value="LST4_longin"/>
</dbReference>
<dbReference type="Pfam" id="PF18639">
    <property type="entry name" value="Longin_2"/>
    <property type="match status" value="1"/>
</dbReference>
<dbReference type="PROSITE" id="PS51836">
    <property type="entry name" value="DENN_FNIP12"/>
    <property type="match status" value="1"/>
</dbReference>
<organism>
    <name type="scientific">Candida glabrata (strain ATCC 2001 / BCRC 20586 / JCM 3761 / NBRC 0622 / NRRL Y-65 / CBS 138)</name>
    <name type="common">Yeast</name>
    <name type="synonym">Nakaseomyces glabratus</name>
    <dbReference type="NCBI Taxonomy" id="284593"/>
    <lineage>
        <taxon>Eukaryota</taxon>
        <taxon>Fungi</taxon>
        <taxon>Dikarya</taxon>
        <taxon>Ascomycota</taxon>
        <taxon>Saccharomycotina</taxon>
        <taxon>Saccharomycetes</taxon>
        <taxon>Saccharomycetales</taxon>
        <taxon>Saccharomycetaceae</taxon>
        <taxon>Nakaseomyces</taxon>
    </lineage>
</organism>
<protein>
    <recommendedName>
        <fullName>Protein LST4</fullName>
    </recommendedName>
</protein>
<gene>
    <name type="primary">LST4</name>
    <name type="ordered locus">CAGL0M08228g</name>
</gene>
<keyword id="KW-0029">Amino-acid transport</keyword>
<keyword id="KW-0653">Protein transport</keyword>
<keyword id="KW-1185">Reference proteome</keyword>
<keyword id="KW-0813">Transport</keyword>
<feature type="chain" id="PRO_0000324405" description="Protein LST4">
    <location>
        <begin position="1"/>
        <end position="840"/>
    </location>
</feature>
<feature type="domain" description="uDENN FNIP1/2-type" evidence="2">
    <location>
        <begin position="34"/>
        <end position="223"/>
    </location>
</feature>
<feature type="domain" description="cDENN FNIP1/2-type" evidence="2">
    <location>
        <begin position="231"/>
        <end position="723"/>
    </location>
</feature>
<feature type="domain" description="dDENN FNIP1/2-type" evidence="2">
    <location>
        <begin position="731"/>
        <end position="836"/>
    </location>
</feature>
<feature type="region of interest" description="Disordered" evidence="3">
    <location>
        <begin position="314"/>
        <end position="343"/>
    </location>
</feature>
<feature type="region of interest" description="Disordered" evidence="3">
    <location>
        <begin position="488"/>
        <end position="509"/>
    </location>
</feature>
<feature type="region of interest" description="Disordered" evidence="3">
    <location>
        <begin position="752"/>
        <end position="771"/>
    </location>
</feature>
<feature type="compositionally biased region" description="Low complexity" evidence="3">
    <location>
        <begin position="323"/>
        <end position="338"/>
    </location>
</feature>
<proteinExistence type="inferred from homology"/>
<sequence>MGERFEGLENLNDECKVKLFGCRMRAPGSGTGGHESIEYRLLILEENAEMVCRQRYRTILDYSSRGHGSMGLKHDEMTNGNVSAPFITASELRQYIYGSPIRSKTRVTEDKFRIIPNSRQLLITRVFYPRRTSMNLHGTFPKNYQSSDRRVSITMCLPSYLLADISDSWADIDGWLTQTERHLMATSFHVVETQDNFVTLVNKLLIPALRSCHEIPRLFLYPQDNIDFIHTWFKDVFNWIELKEGTKLSFLPFLIAKTLIEYRDDPQESECHRIVITSGNLVIANKLVFILGGLLKPRYDGEMKIMITPVSTPTPSNHLMPPSMNGSNESSYHSSSNSHTPSKLKIPATINEHRPSRPRYSSTENIHVQSRTMDIPIVKSDQSPFSTSRGWKIPSSYRSATSSVSISSDESLAEVIQPSSLKSTTSIPFQNFSSSLSNQLYSSSYGSWFNGSITGSFTNSNPLSNGTSNMATFSSSFKKNNISSIFQSNSPTAGTDSWERPENNTGLNPNITLQRTASNSSLRHMLTPYQQQLISPSTNSEYDEYPWFGATNNAGGATVGTSSETVGSQQPVLLQGAHMDTTTLLDSIRTSNNNGAYTFPLKNVGFDRDCSSLDHHKLLTSCFEEIFEGDIDANKVTTMVPCSDIAVHIHSKQEDSEGVTSHPRVVIDVDIPGTTISKYPEELLPRYTMYLSHFNPFFKLQAIPATNEIENKIVHGLKRDFISEKCDVSKTLFISMRSRSIKEIVVRKTTSINTPSNSSNQDPRNKSKGSMLKQKIKKVFSNGTCTGRVTPVLNNCVAFVEAALMSAMSLYSDPTIDKKYRDERILKIFLAVAHYNVDEV</sequence>